<accession>P33885</accession>
<protein>
    <recommendedName>
        <fullName>Non-structural protein NS3</fullName>
    </recommendedName>
    <component>
        <recommendedName>
            <fullName>Non-structural protein NS3A</fullName>
        </recommendedName>
    </component>
</protein>
<comment type="function">
    <text>May play a role in the release of virions from infected cells.</text>
</comment>
<comment type="similarity">
    <text evidence="1">Belongs to the orbivirus NS3 family.</text>
</comment>
<reference key="1">
    <citation type="journal article" date="1991" name="J. Gen. Virol.">
        <title>A comparison of the genes which encode non-structural protein NS3 of different orbiviruses.</title>
        <authorList>
            <person name="van Staden V."/>
            <person name="Huismans H."/>
        </authorList>
    </citation>
    <scope>NUCLEOTIDE SEQUENCE [GENOMIC RNA]</scope>
</reference>
<organism>
    <name type="scientific">African horse sickness virus 9</name>
    <name type="common">AHSV-9</name>
    <dbReference type="NCBI Taxonomy" id="10897"/>
    <lineage>
        <taxon>Viruses</taxon>
        <taxon>Riboviria</taxon>
        <taxon>Orthornavirae</taxon>
        <taxon>Duplornaviricota</taxon>
        <taxon>Resentoviricetes</taxon>
        <taxon>Reovirales</taxon>
        <taxon>Sedoreoviridae</taxon>
        <taxon>Orbivirus</taxon>
        <taxon>African horse sickness virus</taxon>
    </lineage>
</organism>
<sequence length="217" mass="23659">MNLAAIAENYSMHNGESGAIVPYVPPPYNFASAPTFSQRTSQMESVSLGILNQAMSSTTGASGALKDEKAAFGAMAEALRDPEPIRQIKKQVGIRTLKNLKMELATMRRKKSALKIMIFISGCVTLATSMVGGLSIVDDQILDDYKKNDWLMKTIHGLNLLCTTVLLAAGKISDKIQEEISRTKRDIAKRESYVSAASMSWNGDTEMLLQGTKYGES</sequence>
<gene>
    <name type="primary">Segment-10</name>
</gene>
<organismHost>
    <name type="scientific">Camelus dromedarius</name>
    <name type="common">Dromedary</name>
    <name type="synonym">Arabian camel</name>
    <dbReference type="NCBI Taxonomy" id="9838"/>
</organismHost>
<organismHost>
    <name type="scientific">Canis lupus familiaris</name>
    <name type="common">Dog</name>
    <name type="synonym">Canis familiaris</name>
    <dbReference type="NCBI Taxonomy" id="9615"/>
</organismHost>
<organismHost>
    <name type="scientific">Equus asinus</name>
    <name type="common">Donkey</name>
    <name type="synonym">Equus africanus asinus</name>
    <dbReference type="NCBI Taxonomy" id="9793"/>
</organismHost>
<organismHost>
    <name type="scientific">Equus caballus</name>
    <name type="common">Horse</name>
    <dbReference type="NCBI Taxonomy" id="9796"/>
</organismHost>
<organismHost>
    <name type="scientific">Equus hemionus</name>
    <name type="common">Onager</name>
    <name type="synonym">Asian wild ass</name>
    <dbReference type="NCBI Taxonomy" id="9794"/>
</organismHost>
<organismHost>
    <name type="scientific">Equus quagga burchellii</name>
    <name type="common">Burchell's zebra</name>
    <name type="synonym">Equus burchelli</name>
    <dbReference type="NCBI Taxonomy" id="89252"/>
</organismHost>
<organismHost>
    <name type="scientific">Loxodonta africana</name>
    <name type="common">African elephant</name>
    <dbReference type="NCBI Taxonomy" id="9785"/>
</organismHost>
<dbReference type="EMBL" id="D12480">
    <property type="protein sequence ID" value="BAA02048.1"/>
    <property type="molecule type" value="Genomic_RNA"/>
</dbReference>
<dbReference type="PIR" id="PQ0535">
    <property type="entry name" value="PQ0535"/>
</dbReference>
<dbReference type="SMR" id="P33885"/>
<dbReference type="InterPro" id="IPR002565">
    <property type="entry name" value="Orbi_NS3"/>
</dbReference>
<dbReference type="Pfam" id="PF01616">
    <property type="entry name" value="Orbi_NS3"/>
    <property type="match status" value="1"/>
</dbReference>
<feature type="chain" id="PRO_0000040652" description="Non-structural protein NS3">
    <location>
        <begin position="1"/>
        <end position="217"/>
    </location>
</feature>
<feature type="chain" id="PRO_0000040653" description="Non-structural protein NS3A">
    <location>
        <begin position="12"/>
        <end position="217"/>
    </location>
</feature>
<proteinExistence type="inferred from homology"/>
<evidence type="ECO:0000305" key="1"/>
<name>VNS3_AHSV9</name>